<proteinExistence type="inferred from homology"/>
<evidence type="ECO:0000255" key="1">
    <source>
        <dbReference type="HAMAP-Rule" id="MF_01454"/>
    </source>
</evidence>
<evidence type="ECO:0000255" key="2">
    <source>
        <dbReference type="PROSITE-ProRule" id="PRU01231"/>
    </source>
</evidence>
<sequence>MQFIDQARITVRAGRGGDGIMAFRREKYVPAGGPSGGDGGEGGNVVLEADGNLQTLLDFKYNRLFPAPDGRRGGPNRCTGASGKDLIIKVPCGTEVRHLSTGILLGDLTRSDDLLVVAFGGRGGLGNAHYLSNRNRAPEKFTEGRDGEEWFLQLELKLLAEVGIIGLPNAGKSTLISVLSAARPKIADYPFTTLVPNLGVVRRPSGDGTVFADIPGLIAGAAQGAGLGHDFLRHIERTRLLIHVLDGGAEDPVEDLLVVEKELVAYGHDLVERPRLLVLNKQELLDEQHQDQLVDALQAASGRRLILISAAMGLGLEGLLAQVWKELGV</sequence>
<comment type="function">
    <text evidence="1">An essential GTPase which binds GTP, GDP and possibly (p)ppGpp with moderate affinity, with high nucleotide exchange rates and a fairly low GTP hydrolysis rate. Plays a role in control of the cell cycle, stress response, ribosome biogenesis and in those bacteria that undergo differentiation, in morphogenesis control.</text>
</comment>
<comment type="cofactor">
    <cofactor evidence="1">
        <name>Mg(2+)</name>
        <dbReference type="ChEBI" id="CHEBI:18420"/>
    </cofactor>
</comment>
<comment type="subunit">
    <text evidence="1">Monomer.</text>
</comment>
<comment type="subcellular location">
    <subcellularLocation>
        <location evidence="1">Cytoplasm</location>
    </subcellularLocation>
</comment>
<comment type="similarity">
    <text evidence="1">Belongs to the TRAFAC class OBG-HflX-like GTPase superfamily. OBG GTPase family.</text>
</comment>
<protein>
    <recommendedName>
        <fullName evidence="1">GTPase Obg</fullName>
        <ecNumber evidence="1">3.6.5.-</ecNumber>
    </recommendedName>
    <alternativeName>
        <fullName evidence="1">GTP-binding protein Obg</fullName>
    </alternativeName>
</protein>
<gene>
    <name evidence="1" type="primary">obg</name>
    <name type="ordered locus">P9303_03941</name>
</gene>
<keyword id="KW-0067">ATP-binding</keyword>
<keyword id="KW-0963">Cytoplasm</keyword>
<keyword id="KW-0342">GTP-binding</keyword>
<keyword id="KW-0378">Hydrolase</keyword>
<keyword id="KW-0460">Magnesium</keyword>
<keyword id="KW-0479">Metal-binding</keyword>
<keyword id="KW-0547">Nucleotide-binding</keyword>
<dbReference type="EC" id="3.6.5.-" evidence="1"/>
<dbReference type="EMBL" id="CP000554">
    <property type="protein sequence ID" value="ABM77146.1"/>
    <property type="molecule type" value="Genomic_DNA"/>
</dbReference>
<dbReference type="RefSeq" id="WP_011825071.1">
    <property type="nucleotide sequence ID" value="NC_008820.1"/>
</dbReference>
<dbReference type="SMR" id="A2C6N6"/>
<dbReference type="STRING" id="59922.P9303_03941"/>
<dbReference type="KEGG" id="pmf:P9303_03941"/>
<dbReference type="HOGENOM" id="CLU_011747_2_3_3"/>
<dbReference type="BioCyc" id="PMAR59922:G1G80-367-MONOMER"/>
<dbReference type="Proteomes" id="UP000002274">
    <property type="component" value="Chromosome"/>
</dbReference>
<dbReference type="GO" id="GO:0005737">
    <property type="term" value="C:cytoplasm"/>
    <property type="evidence" value="ECO:0007669"/>
    <property type="project" value="UniProtKB-SubCell"/>
</dbReference>
<dbReference type="GO" id="GO:0005524">
    <property type="term" value="F:ATP binding"/>
    <property type="evidence" value="ECO:0007669"/>
    <property type="project" value="UniProtKB-KW"/>
</dbReference>
<dbReference type="GO" id="GO:0005525">
    <property type="term" value="F:GTP binding"/>
    <property type="evidence" value="ECO:0007669"/>
    <property type="project" value="UniProtKB-UniRule"/>
</dbReference>
<dbReference type="GO" id="GO:0003924">
    <property type="term" value="F:GTPase activity"/>
    <property type="evidence" value="ECO:0007669"/>
    <property type="project" value="UniProtKB-UniRule"/>
</dbReference>
<dbReference type="GO" id="GO:0000287">
    <property type="term" value="F:magnesium ion binding"/>
    <property type="evidence" value="ECO:0007669"/>
    <property type="project" value="InterPro"/>
</dbReference>
<dbReference type="GO" id="GO:0042254">
    <property type="term" value="P:ribosome biogenesis"/>
    <property type="evidence" value="ECO:0007669"/>
    <property type="project" value="UniProtKB-UniRule"/>
</dbReference>
<dbReference type="CDD" id="cd01898">
    <property type="entry name" value="Obg"/>
    <property type="match status" value="1"/>
</dbReference>
<dbReference type="FunFam" id="2.70.210.12:FF:000001">
    <property type="entry name" value="GTPase Obg"/>
    <property type="match status" value="1"/>
</dbReference>
<dbReference type="Gene3D" id="2.70.210.12">
    <property type="entry name" value="GTP1/OBG domain"/>
    <property type="match status" value="1"/>
</dbReference>
<dbReference type="Gene3D" id="3.40.50.300">
    <property type="entry name" value="P-loop containing nucleotide triphosphate hydrolases"/>
    <property type="match status" value="1"/>
</dbReference>
<dbReference type="HAMAP" id="MF_01454">
    <property type="entry name" value="GTPase_Obg"/>
    <property type="match status" value="1"/>
</dbReference>
<dbReference type="InterPro" id="IPR031167">
    <property type="entry name" value="G_OBG"/>
</dbReference>
<dbReference type="InterPro" id="IPR006073">
    <property type="entry name" value="GTP-bd"/>
</dbReference>
<dbReference type="InterPro" id="IPR014100">
    <property type="entry name" value="GTP-bd_Obg/CgtA"/>
</dbReference>
<dbReference type="InterPro" id="IPR006169">
    <property type="entry name" value="GTP1_OBG_dom"/>
</dbReference>
<dbReference type="InterPro" id="IPR036726">
    <property type="entry name" value="GTP1_OBG_dom_sf"/>
</dbReference>
<dbReference type="InterPro" id="IPR045086">
    <property type="entry name" value="OBG_GTPase"/>
</dbReference>
<dbReference type="InterPro" id="IPR027417">
    <property type="entry name" value="P-loop_NTPase"/>
</dbReference>
<dbReference type="NCBIfam" id="TIGR02729">
    <property type="entry name" value="Obg_CgtA"/>
    <property type="match status" value="1"/>
</dbReference>
<dbReference type="NCBIfam" id="NF008955">
    <property type="entry name" value="PRK12297.1"/>
    <property type="match status" value="1"/>
</dbReference>
<dbReference type="NCBIfam" id="NF008956">
    <property type="entry name" value="PRK12299.1"/>
    <property type="match status" value="1"/>
</dbReference>
<dbReference type="PANTHER" id="PTHR11702">
    <property type="entry name" value="DEVELOPMENTALLY REGULATED GTP-BINDING PROTEIN-RELATED"/>
    <property type="match status" value="1"/>
</dbReference>
<dbReference type="PANTHER" id="PTHR11702:SF31">
    <property type="entry name" value="MITOCHONDRIAL RIBOSOME-ASSOCIATED GTPASE 2"/>
    <property type="match status" value="1"/>
</dbReference>
<dbReference type="Pfam" id="PF01018">
    <property type="entry name" value="GTP1_OBG"/>
    <property type="match status" value="1"/>
</dbReference>
<dbReference type="Pfam" id="PF01926">
    <property type="entry name" value="MMR_HSR1"/>
    <property type="match status" value="1"/>
</dbReference>
<dbReference type="PIRSF" id="PIRSF002401">
    <property type="entry name" value="GTP_bd_Obg/CgtA"/>
    <property type="match status" value="1"/>
</dbReference>
<dbReference type="PRINTS" id="PR00326">
    <property type="entry name" value="GTP1OBG"/>
</dbReference>
<dbReference type="SUPFAM" id="SSF82051">
    <property type="entry name" value="Obg GTP-binding protein N-terminal domain"/>
    <property type="match status" value="1"/>
</dbReference>
<dbReference type="SUPFAM" id="SSF52540">
    <property type="entry name" value="P-loop containing nucleoside triphosphate hydrolases"/>
    <property type="match status" value="1"/>
</dbReference>
<dbReference type="PROSITE" id="PS51710">
    <property type="entry name" value="G_OBG"/>
    <property type="match status" value="1"/>
</dbReference>
<dbReference type="PROSITE" id="PS51883">
    <property type="entry name" value="OBG"/>
    <property type="match status" value="1"/>
</dbReference>
<feature type="chain" id="PRO_0000386136" description="GTPase Obg">
    <location>
        <begin position="1"/>
        <end position="329"/>
    </location>
</feature>
<feature type="domain" description="Obg" evidence="2">
    <location>
        <begin position="1"/>
        <end position="159"/>
    </location>
</feature>
<feature type="domain" description="OBG-type G" evidence="1">
    <location>
        <begin position="160"/>
        <end position="328"/>
    </location>
</feature>
<feature type="binding site" evidence="1">
    <location>
        <begin position="166"/>
        <end position="173"/>
    </location>
    <ligand>
        <name>ATP</name>
        <dbReference type="ChEBI" id="CHEBI:30616"/>
    </ligand>
</feature>
<feature type="binding site" evidence="1">
    <location>
        <position position="173"/>
    </location>
    <ligand>
        <name>Mg(2+)</name>
        <dbReference type="ChEBI" id="CHEBI:18420"/>
    </ligand>
</feature>
<feature type="binding site" evidence="1">
    <location>
        <begin position="191"/>
        <end position="195"/>
    </location>
    <ligand>
        <name>ATP</name>
        <dbReference type="ChEBI" id="CHEBI:30616"/>
    </ligand>
</feature>
<feature type="binding site" evidence="1">
    <location>
        <position position="193"/>
    </location>
    <ligand>
        <name>Mg(2+)</name>
        <dbReference type="ChEBI" id="CHEBI:18420"/>
    </ligand>
</feature>
<feature type="binding site" evidence="1">
    <location>
        <begin position="213"/>
        <end position="216"/>
    </location>
    <ligand>
        <name>ATP</name>
        <dbReference type="ChEBI" id="CHEBI:30616"/>
    </ligand>
</feature>
<feature type="binding site" evidence="1">
    <location>
        <begin position="280"/>
        <end position="283"/>
    </location>
    <ligand>
        <name>ATP</name>
        <dbReference type="ChEBI" id="CHEBI:30616"/>
    </ligand>
</feature>
<feature type="binding site" evidence="1">
    <location>
        <begin position="309"/>
        <end position="311"/>
    </location>
    <ligand>
        <name>ATP</name>
        <dbReference type="ChEBI" id="CHEBI:30616"/>
    </ligand>
</feature>
<reference key="1">
    <citation type="journal article" date="2007" name="PLoS Genet.">
        <title>Patterns and implications of gene gain and loss in the evolution of Prochlorococcus.</title>
        <authorList>
            <person name="Kettler G.C."/>
            <person name="Martiny A.C."/>
            <person name="Huang K."/>
            <person name="Zucker J."/>
            <person name="Coleman M.L."/>
            <person name="Rodrigue S."/>
            <person name="Chen F."/>
            <person name="Lapidus A."/>
            <person name="Ferriera S."/>
            <person name="Johnson J."/>
            <person name="Steglich C."/>
            <person name="Church G.M."/>
            <person name="Richardson P."/>
            <person name="Chisholm S.W."/>
        </authorList>
    </citation>
    <scope>NUCLEOTIDE SEQUENCE [LARGE SCALE GENOMIC DNA]</scope>
    <source>
        <strain>MIT 9303</strain>
    </source>
</reference>
<accession>A2C6N6</accession>
<organism>
    <name type="scientific">Prochlorococcus marinus (strain MIT 9303)</name>
    <dbReference type="NCBI Taxonomy" id="59922"/>
    <lineage>
        <taxon>Bacteria</taxon>
        <taxon>Bacillati</taxon>
        <taxon>Cyanobacteriota</taxon>
        <taxon>Cyanophyceae</taxon>
        <taxon>Synechococcales</taxon>
        <taxon>Prochlorococcaceae</taxon>
        <taxon>Prochlorococcus</taxon>
    </lineage>
</organism>
<name>OBG_PROM3</name>